<keyword id="KW-1185">Reference proteome</keyword>
<dbReference type="EMBL" id="CU329672">
    <property type="protein sequence ID" value="CAA22855.1"/>
    <property type="molecule type" value="Genomic_DNA"/>
</dbReference>
<dbReference type="PIR" id="T40933">
    <property type="entry name" value="T40933"/>
</dbReference>
<dbReference type="BioGRID" id="275645">
    <property type="interactions" value="56"/>
</dbReference>
<dbReference type="DIP" id="DIP-61019N"/>
<dbReference type="FunCoup" id="O94542">
    <property type="interactions" value="5"/>
</dbReference>
<dbReference type="IntAct" id="O94542">
    <property type="interactions" value="4"/>
</dbReference>
<dbReference type="STRING" id="284812.O94542"/>
<dbReference type="iPTMnet" id="O94542"/>
<dbReference type="PaxDb" id="4896-SPCC1322.02.1"/>
<dbReference type="EnsemblFungi" id="SPCC1322.02.1">
    <property type="protein sequence ID" value="SPCC1322.02.1:pep"/>
    <property type="gene ID" value="SPCC1322.02"/>
</dbReference>
<dbReference type="KEGG" id="spo:2539073"/>
<dbReference type="PomBase" id="SPCC1322.02"/>
<dbReference type="VEuPathDB" id="FungiDB:SPCC1322.02"/>
<dbReference type="HOGENOM" id="CLU_790255_0_0_1"/>
<dbReference type="InParanoid" id="O94542"/>
<dbReference type="OMA" id="PQKVAPY"/>
<dbReference type="PRO" id="PR:O94542"/>
<dbReference type="Proteomes" id="UP000002485">
    <property type="component" value="Chromosome III"/>
</dbReference>
<dbReference type="GO" id="GO:0005737">
    <property type="term" value="C:cytoplasm"/>
    <property type="evidence" value="ECO:0007005"/>
    <property type="project" value="PomBase"/>
</dbReference>
<dbReference type="GO" id="GO:0005829">
    <property type="term" value="C:cytosol"/>
    <property type="evidence" value="ECO:0007005"/>
    <property type="project" value="PomBase"/>
</dbReference>
<dbReference type="GO" id="GO:0072686">
    <property type="term" value="C:mitotic spindle"/>
    <property type="evidence" value="ECO:0007005"/>
    <property type="project" value="PomBase"/>
</dbReference>
<dbReference type="GO" id="GO:0005634">
    <property type="term" value="C:nucleus"/>
    <property type="evidence" value="ECO:0000314"/>
    <property type="project" value="PomBase"/>
</dbReference>
<dbReference type="GO" id="GO:0140656">
    <property type="term" value="F:endodeoxyribonuclease activator activity"/>
    <property type="evidence" value="ECO:0000314"/>
    <property type="project" value="PomBase"/>
</dbReference>
<dbReference type="GO" id="GO:0000729">
    <property type="term" value="P:DNA double-strand break processing"/>
    <property type="evidence" value="ECO:0000316"/>
    <property type="project" value="PomBase"/>
</dbReference>
<dbReference type="GO" id="GO:0006302">
    <property type="term" value="P:double-strand break repair"/>
    <property type="evidence" value="ECO:0000315"/>
    <property type="project" value="PomBase"/>
</dbReference>
<dbReference type="GO" id="GO:0045002">
    <property type="term" value="P:double-strand break repair via single-strand annealing"/>
    <property type="evidence" value="ECO:0000315"/>
    <property type="project" value="PomBase"/>
</dbReference>
<dbReference type="GO" id="GO:0007534">
    <property type="term" value="P:gene conversion at mating-type locus"/>
    <property type="evidence" value="ECO:0000315"/>
    <property type="project" value="PomBase"/>
</dbReference>
<gene>
    <name type="ORF">SPCC1322.02</name>
</gene>
<organism>
    <name type="scientific">Schizosaccharomyces pombe (strain 972 / ATCC 24843)</name>
    <name type="common">Fission yeast</name>
    <dbReference type="NCBI Taxonomy" id="284812"/>
    <lineage>
        <taxon>Eukaryota</taxon>
        <taxon>Fungi</taxon>
        <taxon>Dikarya</taxon>
        <taxon>Ascomycota</taxon>
        <taxon>Taphrinomycotina</taxon>
        <taxon>Schizosaccharomycetes</taxon>
        <taxon>Schizosaccharomycetales</taxon>
        <taxon>Schizosaccharomycetaceae</taxon>
        <taxon>Schizosaccharomyces</taxon>
    </lineage>
</organism>
<accession>O94542</accession>
<sequence>MIESKGETAPSLNLNDVNVEENDAAQSFAEKVQRFRYQMKVHAAPRQKTLHSFLKKDNANIHDFTKVEKPHIRSSKSKVSYNSITSRVTKYFEEKNNSVDQLHSESLTPLSFGHTIPKKKPLLMTASVSEDSRVRVSKRQFKSKVVHPEIAISIAKRHKPKFPLSDELMNVEPGFHHSNIGCQITPYLWISSFRTNVYYLIGNEGDLLSQQVPSISGELNMLRGVCTRIDDDNRYDIEQAGSCFGMSVFPTSDSGEESFTTLESDPIVNCEHDEKKVADNLLVPQVMCSSNISTFFRSPGGKKLYHYLWKNSNALRISSNDLLEILLKHGVYVSLDTLHSWLQERNVNFEK</sequence>
<feature type="chain" id="PRO_0000116543" description="Uncharacterized protein C1322.02">
    <location>
        <begin position="1"/>
        <end position="351"/>
    </location>
</feature>
<comment type="interaction">
    <interactant intactId="EBI-16120253">
        <id>O94542</id>
    </interactant>
    <interactant intactId="EBI-1559355">
        <id>O75004</id>
        <label>cdc24</label>
    </interactant>
    <organismsDiffer>false</organismsDiffer>
    <experiments>5</experiments>
</comment>
<comment type="interaction">
    <interactant intactId="EBI-16120253">
        <id>O94542</id>
    </interactant>
    <interactant intactId="EBI-16120215">
        <id>P36617</id>
        <label>rad16</label>
    </interactant>
    <organismsDiffer>false</organismsDiffer>
    <experiments>4</experiments>
</comment>
<protein>
    <recommendedName>
        <fullName>Uncharacterized protein C1322.02</fullName>
    </recommendedName>
</protein>
<reference key="1">
    <citation type="journal article" date="2002" name="Nature">
        <title>The genome sequence of Schizosaccharomyces pombe.</title>
        <authorList>
            <person name="Wood V."/>
            <person name="Gwilliam R."/>
            <person name="Rajandream M.A."/>
            <person name="Lyne M.H."/>
            <person name="Lyne R."/>
            <person name="Stewart A."/>
            <person name="Sgouros J.G."/>
            <person name="Peat N."/>
            <person name="Hayles J."/>
            <person name="Baker S.G."/>
            <person name="Basham D."/>
            <person name="Bowman S."/>
            <person name="Brooks K."/>
            <person name="Brown D."/>
            <person name="Brown S."/>
            <person name="Chillingworth T."/>
            <person name="Churcher C.M."/>
            <person name="Collins M."/>
            <person name="Connor R."/>
            <person name="Cronin A."/>
            <person name="Davis P."/>
            <person name="Feltwell T."/>
            <person name="Fraser A."/>
            <person name="Gentles S."/>
            <person name="Goble A."/>
            <person name="Hamlin N."/>
            <person name="Harris D.E."/>
            <person name="Hidalgo J."/>
            <person name="Hodgson G."/>
            <person name="Holroyd S."/>
            <person name="Hornsby T."/>
            <person name="Howarth S."/>
            <person name="Huckle E.J."/>
            <person name="Hunt S."/>
            <person name="Jagels K."/>
            <person name="James K.D."/>
            <person name="Jones L."/>
            <person name="Jones M."/>
            <person name="Leather S."/>
            <person name="McDonald S."/>
            <person name="McLean J."/>
            <person name="Mooney P."/>
            <person name="Moule S."/>
            <person name="Mungall K.L."/>
            <person name="Murphy L.D."/>
            <person name="Niblett D."/>
            <person name="Odell C."/>
            <person name="Oliver K."/>
            <person name="O'Neil S."/>
            <person name="Pearson D."/>
            <person name="Quail M.A."/>
            <person name="Rabbinowitsch E."/>
            <person name="Rutherford K.M."/>
            <person name="Rutter S."/>
            <person name="Saunders D."/>
            <person name="Seeger K."/>
            <person name="Sharp S."/>
            <person name="Skelton J."/>
            <person name="Simmonds M.N."/>
            <person name="Squares R."/>
            <person name="Squares S."/>
            <person name="Stevens K."/>
            <person name="Taylor K."/>
            <person name="Taylor R.G."/>
            <person name="Tivey A."/>
            <person name="Walsh S.V."/>
            <person name="Warren T."/>
            <person name="Whitehead S."/>
            <person name="Woodward J.R."/>
            <person name="Volckaert G."/>
            <person name="Aert R."/>
            <person name="Robben J."/>
            <person name="Grymonprez B."/>
            <person name="Weltjens I."/>
            <person name="Vanstreels E."/>
            <person name="Rieger M."/>
            <person name="Schaefer M."/>
            <person name="Mueller-Auer S."/>
            <person name="Gabel C."/>
            <person name="Fuchs M."/>
            <person name="Duesterhoeft A."/>
            <person name="Fritzc C."/>
            <person name="Holzer E."/>
            <person name="Moestl D."/>
            <person name="Hilbert H."/>
            <person name="Borzym K."/>
            <person name="Langer I."/>
            <person name="Beck A."/>
            <person name="Lehrach H."/>
            <person name="Reinhardt R."/>
            <person name="Pohl T.M."/>
            <person name="Eger P."/>
            <person name="Zimmermann W."/>
            <person name="Wedler H."/>
            <person name="Wambutt R."/>
            <person name="Purnelle B."/>
            <person name="Goffeau A."/>
            <person name="Cadieu E."/>
            <person name="Dreano S."/>
            <person name="Gloux S."/>
            <person name="Lelaure V."/>
            <person name="Mottier S."/>
            <person name="Galibert F."/>
            <person name="Aves S.J."/>
            <person name="Xiang Z."/>
            <person name="Hunt C."/>
            <person name="Moore K."/>
            <person name="Hurst S.M."/>
            <person name="Lucas M."/>
            <person name="Rochet M."/>
            <person name="Gaillardin C."/>
            <person name="Tallada V.A."/>
            <person name="Garzon A."/>
            <person name="Thode G."/>
            <person name="Daga R.R."/>
            <person name="Cruzado L."/>
            <person name="Jimenez J."/>
            <person name="Sanchez M."/>
            <person name="del Rey F."/>
            <person name="Benito J."/>
            <person name="Dominguez A."/>
            <person name="Revuelta J.L."/>
            <person name="Moreno S."/>
            <person name="Armstrong J."/>
            <person name="Forsburg S.L."/>
            <person name="Cerutti L."/>
            <person name="Lowe T."/>
            <person name="McCombie W.R."/>
            <person name="Paulsen I."/>
            <person name="Potashkin J."/>
            <person name="Shpakovski G.V."/>
            <person name="Ussery D."/>
            <person name="Barrell B.G."/>
            <person name="Nurse P."/>
        </authorList>
    </citation>
    <scope>NUCLEOTIDE SEQUENCE [LARGE SCALE GENOMIC DNA]</scope>
    <source>
        <strain>972 / ATCC 24843</strain>
    </source>
</reference>
<proteinExistence type="evidence at protein level"/>
<name>YCD2_SCHPO</name>